<organism>
    <name type="scientific">Streptococcus pyogenes serotype M3 (strain SSI-1)</name>
    <dbReference type="NCBI Taxonomy" id="193567"/>
    <lineage>
        <taxon>Bacteria</taxon>
        <taxon>Bacillati</taxon>
        <taxon>Bacillota</taxon>
        <taxon>Bacilli</taxon>
        <taxon>Lactobacillales</taxon>
        <taxon>Streptococcaceae</taxon>
        <taxon>Streptococcus</taxon>
    </lineage>
</organism>
<gene>
    <name evidence="1" type="primary">nusB</name>
    <name type="ordered locus">SPs0295</name>
</gene>
<protein>
    <recommendedName>
        <fullName evidence="1">Transcription antitermination protein NusB</fullName>
    </recommendedName>
    <alternativeName>
        <fullName evidence="1">Antitermination factor NusB</fullName>
    </alternativeName>
</protein>
<dbReference type="EMBL" id="BA000034">
    <property type="protein sequence ID" value="BAC63390.1"/>
    <property type="status" value="ALT_INIT"/>
    <property type="molecule type" value="Genomic_DNA"/>
</dbReference>
<dbReference type="RefSeq" id="WP_002988501.1">
    <property type="nucleotide sequence ID" value="NC_004606.1"/>
</dbReference>
<dbReference type="SMR" id="P0DC77"/>
<dbReference type="GeneID" id="69900353"/>
<dbReference type="KEGG" id="sps:SPs0295"/>
<dbReference type="HOGENOM" id="CLU_087843_3_2_9"/>
<dbReference type="GO" id="GO:0005829">
    <property type="term" value="C:cytosol"/>
    <property type="evidence" value="ECO:0007669"/>
    <property type="project" value="TreeGrafter"/>
</dbReference>
<dbReference type="GO" id="GO:0003723">
    <property type="term" value="F:RNA binding"/>
    <property type="evidence" value="ECO:0007669"/>
    <property type="project" value="UniProtKB-UniRule"/>
</dbReference>
<dbReference type="GO" id="GO:0006353">
    <property type="term" value="P:DNA-templated transcription termination"/>
    <property type="evidence" value="ECO:0007669"/>
    <property type="project" value="UniProtKB-UniRule"/>
</dbReference>
<dbReference type="GO" id="GO:0031564">
    <property type="term" value="P:transcription antitermination"/>
    <property type="evidence" value="ECO:0007669"/>
    <property type="project" value="UniProtKB-KW"/>
</dbReference>
<dbReference type="Gene3D" id="1.10.940.10">
    <property type="entry name" value="NusB-like"/>
    <property type="match status" value="1"/>
</dbReference>
<dbReference type="HAMAP" id="MF_00073">
    <property type="entry name" value="NusB"/>
    <property type="match status" value="1"/>
</dbReference>
<dbReference type="InterPro" id="IPR035926">
    <property type="entry name" value="NusB-like_sf"/>
</dbReference>
<dbReference type="InterPro" id="IPR011605">
    <property type="entry name" value="NusB_fam"/>
</dbReference>
<dbReference type="InterPro" id="IPR006027">
    <property type="entry name" value="NusB_RsmB_TIM44"/>
</dbReference>
<dbReference type="NCBIfam" id="TIGR01951">
    <property type="entry name" value="nusB"/>
    <property type="match status" value="1"/>
</dbReference>
<dbReference type="NCBIfam" id="NF001223">
    <property type="entry name" value="PRK00202.1-1"/>
    <property type="match status" value="1"/>
</dbReference>
<dbReference type="PANTHER" id="PTHR11078:SF3">
    <property type="entry name" value="ANTITERMINATION NUSB DOMAIN-CONTAINING PROTEIN"/>
    <property type="match status" value="1"/>
</dbReference>
<dbReference type="PANTHER" id="PTHR11078">
    <property type="entry name" value="N UTILIZATION SUBSTANCE PROTEIN B-RELATED"/>
    <property type="match status" value="1"/>
</dbReference>
<dbReference type="Pfam" id="PF01029">
    <property type="entry name" value="NusB"/>
    <property type="match status" value="1"/>
</dbReference>
<dbReference type="SUPFAM" id="SSF48013">
    <property type="entry name" value="NusB-like"/>
    <property type="match status" value="1"/>
</dbReference>
<name>NUSB_STRPQ</name>
<evidence type="ECO:0000255" key="1">
    <source>
        <dbReference type="HAMAP-Rule" id="MF_00073"/>
    </source>
</evidence>
<evidence type="ECO:0000305" key="2"/>
<proteinExistence type="inferred from homology"/>
<comment type="function">
    <text evidence="1">Involved in transcription antitermination. Required for transcription of ribosomal RNA (rRNA) genes. Binds specifically to the boxA antiterminator sequence of the ribosomal RNA (rrn) operons.</text>
</comment>
<comment type="similarity">
    <text evidence="1">Belongs to the NusB family.</text>
</comment>
<comment type="sequence caution" evidence="2">
    <conflict type="erroneous initiation">
        <sequence resource="EMBL-CDS" id="BAC63390"/>
    </conflict>
</comment>
<reference key="1">
    <citation type="journal article" date="2003" name="Genome Res.">
        <title>Genome sequence of an M3 strain of Streptococcus pyogenes reveals a large-scale genomic rearrangement in invasive strains and new insights into phage evolution.</title>
        <authorList>
            <person name="Nakagawa I."/>
            <person name="Kurokawa K."/>
            <person name="Yamashita A."/>
            <person name="Nakata M."/>
            <person name="Tomiyasu Y."/>
            <person name="Okahashi N."/>
            <person name="Kawabata S."/>
            <person name="Yamazaki K."/>
            <person name="Shiba T."/>
            <person name="Yasunaga T."/>
            <person name="Hayashi H."/>
            <person name="Hattori M."/>
            <person name="Hamada S."/>
        </authorList>
    </citation>
    <scope>NUCLEOTIDE SEQUENCE [LARGE SCALE GENOMIC DNA]</scope>
    <source>
        <strain>SSI-1</strain>
    </source>
</reference>
<feature type="chain" id="PRO_0000411426" description="Transcription antitermination protein NusB">
    <location>
        <begin position="1"/>
        <end position="150"/>
    </location>
</feature>
<sequence length="150" mass="16979">MTNSFQNSRRDLRERAFQALFNIEMGAELLAASQFAYGYDKVTGEDAQVLELPIFLLSLVTGVNNHKEELDNLISTHLKKGWSLERLTLTDKTLLRLGLFEIKYFDETPDRVALNEIIEVAKKYSDETSAKFINGLLSQYVSEAPSANKS</sequence>
<accession>P0DC77</accession>
<accession>P65584</accession>
<accession>Q8NZJ4</accession>
<keyword id="KW-0694">RNA-binding</keyword>
<keyword id="KW-0804">Transcription</keyword>
<keyword id="KW-0889">Transcription antitermination</keyword>
<keyword id="KW-0805">Transcription regulation</keyword>